<reference key="1">
    <citation type="journal article" date="2014" name="Plant J.">
        <title>The plant glycosyltransferase clone collection for functional genomics.</title>
        <authorList>
            <person name="Lao J."/>
            <person name="Oikawa A."/>
            <person name="Bromley J.R."/>
            <person name="McInerney P."/>
            <person name="Suttangkakul A."/>
            <person name="Smith-Moritz A.M."/>
            <person name="Plahar H."/>
            <person name="Chiu T.-Y."/>
            <person name="Gonzalez Fernandez-Nino S.M.G."/>
            <person name="Ebert B."/>
            <person name="Yang F."/>
            <person name="Christiansen K.M."/>
            <person name="Hansen S.F."/>
            <person name="Stonebloom S."/>
            <person name="Adams P.D."/>
            <person name="Ronald P.C."/>
            <person name="Hillson N.J."/>
            <person name="Hadi M.Z."/>
            <person name="Vega-Sanchez M.E."/>
            <person name="Loque D."/>
            <person name="Scheller H.V."/>
            <person name="Heazlewood J.L."/>
        </authorList>
    </citation>
    <scope>NUCLEOTIDE SEQUENCE [MRNA]</scope>
    <scope>WEB RESOURCE</scope>
    <scope>GENE FAMILY</scope>
    <source>
        <strain>cv. Columbia</strain>
    </source>
</reference>
<reference key="2">
    <citation type="journal article" date="2000" name="Nature">
        <title>Sequence and analysis of chromosome 3 of the plant Arabidopsis thaliana.</title>
        <authorList>
            <person name="Salanoubat M."/>
            <person name="Lemcke K."/>
            <person name="Rieger M."/>
            <person name="Ansorge W."/>
            <person name="Unseld M."/>
            <person name="Fartmann B."/>
            <person name="Valle G."/>
            <person name="Bloecker H."/>
            <person name="Perez-Alonso M."/>
            <person name="Obermaier B."/>
            <person name="Delseny M."/>
            <person name="Boutry M."/>
            <person name="Grivell L.A."/>
            <person name="Mache R."/>
            <person name="Puigdomenech P."/>
            <person name="De Simone V."/>
            <person name="Choisne N."/>
            <person name="Artiguenave F."/>
            <person name="Robert C."/>
            <person name="Brottier P."/>
            <person name="Wincker P."/>
            <person name="Cattolico L."/>
            <person name="Weissenbach J."/>
            <person name="Saurin W."/>
            <person name="Quetier F."/>
            <person name="Schaefer M."/>
            <person name="Mueller-Auer S."/>
            <person name="Gabel C."/>
            <person name="Fuchs M."/>
            <person name="Benes V."/>
            <person name="Wurmbach E."/>
            <person name="Drzonek H."/>
            <person name="Erfle H."/>
            <person name="Jordan N."/>
            <person name="Bangert S."/>
            <person name="Wiedelmann R."/>
            <person name="Kranz H."/>
            <person name="Voss H."/>
            <person name="Holland R."/>
            <person name="Brandt P."/>
            <person name="Nyakatura G."/>
            <person name="Vezzi A."/>
            <person name="D'Angelo M."/>
            <person name="Pallavicini A."/>
            <person name="Toppo S."/>
            <person name="Simionati B."/>
            <person name="Conrad A."/>
            <person name="Hornischer K."/>
            <person name="Kauer G."/>
            <person name="Loehnert T.-H."/>
            <person name="Nordsiek G."/>
            <person name="Reichelt J."/>
            <person name="Scharfe M."/>
            <person name="Schoen O."/>
            <person name="Bargues M."/>
            <person name="Terol J."/>
            <person name="Climent J."/>
            <person name="Navarro P."/>
            <person name="Collado C."/>
            <person name="Perez-Perez A."/>
            <person name="Ottenwaelder B."/>
            <person name="Duchemin D."/>
            <person name="Cooke R."/>
            <person name="Laudie M."/>
            <person name="Berger-Llauro C."/>
            <person name="Purnelle B."/>
            <person name="Masuy D."/>
            <person name="de Haan M."/>
            <person name="Maarse A.C."/>
            <person name="Alcaraz J.-P."/>
            <person name="Cottet A."/>
            <person name="Casacuberta E."/>
            <person name="Monfort A."/>
            <person name="Argiriou A."/>
            <person name="Flores M."/>
            <person name="Liguori R."/>
            <person name="Vitale D."/>
            <person name="Mannhaupt G."/>
            <person name="Haase D."/>
            <person name="Schoof H."/>
            <person name="Rudd S."/>
            <person name="Zaccaria P."/>
            <person name="Mewes H.-W."/>
            <person name="Mayer K.F.X."/>
            <person name="Kaul S."/>
            <person name="Town C.D."/>
            <person name="Koo H.L."/>
            <person name="Tallon L.J."/>
            <person name="Jenkins J."/>
            <person name="Rooney T."/>
            <person name="Rizzo M."/>
            <person name="Walts A."/>
            <person name="Utterback T."/>
            <person name="Fujii C.Y."/>
            <person name="Shea T.P."/>
            <person name="Creasy T.H."/>
            <person name="Haas B."/>
            <person name="Maiti R."/>
            <person name="Wu D."/>
            <person name="Peterson J."/>
            <person name="Van Aken S."/>
            <person name="Pai G."/>
            <person name="Militscher J."/>
            <person name="Sellers P."/>
            <person name="Gill J.E."/>
            <person name="Feldblyum T.V."/>
            <person name="Preuss D."/>
            <person name="Lin X."/>
            <person name="Nierman W.C."/>
            <person name="Salzberg S.L."/>
            <person name="White O."/>
            <person name="Venter J.C."/>
            <person name="Fraser C.M."/>
            <person name="Kaneko T."/>
            <person name="Nakamura Y."/>
            <person name="Sato S."/>
            <person name="Kato T."/>
            <person name="Asamizu E."/>
            <person name="Sasamoto S."/>
            <person name="Kimura T."/>
            <person name="Idesawa K."/>
            <person name="Kawashima K."/>
            <person name="Kishida Y."/>
            <person name="Kiyokawa C."/>
            <person name="Kohara M."/>
            <person name="Matsumoto M."/>
            <person name="Matsuno A."/>
            <person name="Muraki A."/>
            <person name="Nakayama S."/>
            <person name="Nakazaki N."/>
            <person name="Shinpo S."/>
            <person name="Takeuchi C."/>
            <person name="Wada T."/>
            <person name="Watanabe A."/>
            <person name="Yamada M."/>
            <person name="Yasuda M."/>
            <person name="Tabata S."/>
        </authorList>
    </citation>
    <scope>NUCLEOTIDE SEQUENCE [LARGE SCALE GENOMIC DNA]</scope>
    <source>
        <strain>cv. Columbia</strain>
    </source>
</reference>
<reference key="3">
    <citation type="journal article" date="2017" name="Plant J.">
        <title>Araport11: a complete reannotation of the Arabidopsis thaliana reference genome.</title>
        <authorList>
            <person name="Cheng C.Y."/>
            <person name="Krishnakumar V."/>
            <person name="Chan A.P."/>
            <person name="Thibaud-Nissen F."/>
            <person name="Schobel S."/>
            <person name="Town C.D."/>
        </authorList>
    </citation>
    <scope>GENOME REANNOTATION</scope>
    <source>
        <strain>cv. Columbia</strain>
    </source>
</reference>
<reference key="4">
    <citation type="submission" date="2006-07" db="EMBL/GenBank/DDBJ databases">
        <title>Large-scale analysis of RIKEN Arabidopsis full-length (RAFL) cDNAs.</title>
        <authorList>
            <person name="Totoki Y."/>
            <person name="Seki M."/>
            <person name="Ishida J."/>
            <person name="Nakajima M."/>
            <person name="Enju A."/>
            <person name="Kamiya A."/>
            <person name="Narusaka M."/>
            <person name="Shin-i T."/>
            <person name="Nakagawa M."/>
            <person name="Sakamoto N."/>
            <person name="Oishi K."/>
            <person name="Kohara Y."/>
            <person name="Kobayashi M."/>
            <person name="Toyoda A."/>
            <person name="Sakaki Y."/>
            <person name="Sakurai T."/>
            <person name="Iida K."/>
            <person name="Akiyama K."/>
            <person name="Satou M."/>
            <person name="Toyoda T."/>
            <person name="Konagaya A."/>
            <person name="Carninci P."/>
            <person name="Kawai J."/>
            <person name="Hayashizaki Y."/>
            <person name="Shinozaki K."/>
        </authorList>
    </citation>
    <scope>NUCLEOTIDE SEQUENCE [LARGE SCALE MRNA]</scope>
    <source>
        <strain>cv. Columbia</strain>
    </source>
</reference>
<reference key="5">
    <citation type="journal article" date="2005" name="Plant J.">
        <title>Cell adhesion in Arabidopsis thaliana is mediated by ECTOPICALLY PARTING CELLS 1--a glycosyltransferase (GT64) related to the animal exostosins.</title>
        <authorList>
            <person name="Singh S.K."/>
            <person name="Eland C."/>
            <person name="Harholt J."/>
            <person name="Scheller H.V."/>
            <person name="Marchant A."/>
        </authorList>
    </citation>
    <scope>FUNCTION</scope>
    <scope>DISRUPTION PHENOTYPE</scope>
</reference>
<reference key="6">
    <citation type="journal article" date="2007" name="J. Exp. Bot.">
        <title>The ectopically parting cells 1-2 (epc1-2) mutant exhibits an exaggerated response to abscisic acid.</title>
        <authorList>
            <person name="Bown L."/>
            <person name="Kusaba S."/>
            <person name="Goubet F."/>
            <person name="Codrai L."/>
            <person name="Dale A.G."/>
            <person name="Zhang Z."/>
            <person name="Yu X."/>
            <person name="Morris K."/>
            <person name="Ishii T."/>
            <person name="Evered C."/>
            <person name="Dupree P."/>
            <person name="Jackson S."/>
        </authorList>
    </citation>
    <scope>FUNCTION</scope>
    <scope>DISRUPTION PHENOTYPE</scope>
    <scope>SUBCELLULAR LOCATION</scope>
    <scope>TISSUE SPECIFICITY</scope>
    <source>
        <strain>cv. Wassilewskija</strain>
    </source>
</reference>
<reference key="7">
    <citation type="journal article" date="2010" name="J. Proteome Res.">
        <title>Identification of novel proteins involved in plant cell-wall synthesis based on protein-protein interaction data.</title>
        <authorList>
            <person name="Zhou C."/>
            <person name="Yin Y."/>
            <person name="Dam P."/>
            <person name="Xu Y."/>
        </authorList>
    </citation>
    <scope>FUNCTION</scope>
</reference>
<reference key="8">
    <citation type="journal article" date="2016" name="Plant Cell">
        <title>Loss of inositol phosphorylceramide sphingolipid mannosylation induces plant immune responses and reduces cellulose content in Arabidopsis.</title>
        <authorList>
            <person name="Fang L."/>
            <person name="Ishikawa T."/>
            <person name="Rennie E.A."/>
            <person name="Murawska G.M."/>
            <person name="Lao J."/>
            <person name="Yan J."/>
            <person name="Tsai A.Y.-L."/>
            <person name="Baidoo E.E.K."/>
            <person name="Xu J."/>
            <person name="Keasling J.D."/>
            <person name="Demura T."/>
            <person name="Kawai-Yamada M."/>
            <person name="Scheller H.V."/>
            <person name="Mortimer J.C."/>
        </authorList>
    </citation>
    <scope>FUNCTION</scope>
    <scope>DISRUPTION PHENOTYPE</scope>
    <scope>SUBCELLULAR LOCATION</scope>
    <scope>CATALYTIC ACTIVITY</scope>
    <scope>PATHWAY</scope>
    <source>
        <strain>cv. Columbia</strain>
    </source>
</reference>
<evidence type="ECO:0000250" key="1"/>
<evidence type="ECO:0000250" key="2">
    <source>
        <dbReference type="UniProtKB" id="Q9ES89"/>
    </source>
</evidence>
<evidence type="ECO:0000255" key="3"/>
<evidence type="ECO:0000255" key="4">
    <source>
        <dbReference type="PROSITE-ProRule" id="PRU00498"/>
    </source>
</evidence>
<evidence type="ECO:0000269" key="5">
    <source>
    </source>
</evidence>
<evidence type="ECO:0000269" key="6">
    <source>
    </source>
</evidence>
<evidence type="ECO:0000269" key="7">
    <source>
    </source>
</evidence>
<evidence type="ECO:0000303" key="8">
    <source>
    </source>
</evidence>
<evidence type="ECO:0000303" key="9">
    <source>
    </source>
</evidence>
<evidence type="ECO:0000303" key="10">
    <source>
    </source>
</evidence>
<evidence type="ECO:0000303" key="11">
    <source>
    </source>
</evidence>
<evidence type="ECO:0000305" key="12"/>
<evidence type="ECO:0000305" key="13">
    <source>
    </source>
</evidence>
<evidence type="ECO:0000312" key="14">
    <source>
        <dbReference type="Araport" id="AT3G55830"/>
    </source>
</evidence>
<evidence type="ECO:0000312" key="15">
    <source>
        <dbReference type="EMBL" id="CAB87837.1"/>
    </source>
</evidence>
<gene>
    <name evidence="11" type="primary">GMT1</name>
    <name evidence="8" type="synonym">EPC1</name>
    <name evidence="14" type="ordered locus">At3g55830</name>
    <name evidence="15" type="ORF">F27K19.10</name>
</gene>
<sequence length="334" mass="38300">MGGGEVSKEMGACSLAYRRGDQKLRKFVTARSTKFLLFCCIAFVLVTIVCRSSRPWVNSSIAVADRISGSRKGYTLLMNTWKRYDLLKKSVSHYASCSRLDSIHIVWSEPNPPSESLKEYLHNVLKKKTRDGHEVELRFDINKEDSLNNRFKEIKDLKTDAVFSIDDDIIFPCHTVDFAFNVWESAPDTMVGFVPRVHWPEKSNDKANYYTYSGWWSVWWSGTYSMVLSKAAFFHKKYLSLYTNSMPASIREFTTKNRNCEDIAMSFLIANATNAPAIWVKGKIYEIGSTGISSIGGHTEKRTHCVNRFVAEFGKMPLVYTSMKAVDSRNLWFW</sequence>
<comment type="function">
    <text evidence="1 5 6 7 9">Mannosyl transferase (ManT) required for the biosynthesis of mannose-carrying glycosylinositol phosphorylceramides (GIPCs) (PubMed:27895225). Maybe involved in cell-cell adhesion that maintains the integrity of organs by providing mechanical strength and facilitating the movement of metabolites throughout the plant during development (PubMed:16045474). Prevents abscisic acid- (ABA-) mediated effects on development (e.g. cell size, flowering time, senescence). Probably implicated in beta-(1,4)-galactan biosynthesis thus being a cell-wall synthesis-related (CWSR) protein (PubMed:17426055, PubMed:20687615).</text>
</comment>
<comment type="cofactor">
    <cofactor evidence="2">
        <name>Mn(2+)</name>
        <dbReference type="ChEBI" id="CHEBI:29035"/>
    </cofactor>
</comment>
<comment type="pathway">
    <text evidence="12">Protein modification; protein glycosylation.</text>
</comment>
<comment type="pathway">
    <text evidence="7">Sphingolipid metabolism.</text>
</comment>
<comment type="subcellular location">
    <subcellularLocation>
        <location evidence="6 7">Golgi apparatus membrane</location>
        <topology evidence="3">Single-pass type II membrane protein</topology>
    </subcellularLocation>
</comment>
<comment type="tissue specificity">
    <text evidence="6">Expressed in leaves, roots, stem, and flowers.</text>
</comment>
<comment type="disruption phenotype">
    <text evidence="5 6 7">Disturbed production of mannose-carrying glycosylinositol phosphorylceramides (GIPCs) in gmt1-3 (PubMed:27895225). Dwarf plants exhibiting a constitutive hypersensitive response characterized by elevated salicylic acid (SA) and hydrogen peroxide H(2)O(2) levels (PubMed:27895225). Reduced cellulose content, but increased lignin accumulation in cell walls (PubMed:27895225). In epc1-1, strong growth reduction, mechanical fragility, defects in vascular formation and enhanced secondary growth in hypocotyl tissues probably due to abnormal cell-cell adhesion properties in hypocotyl, cotyledon and cortical parenchyma tissues (PubMed:16045474). Ectopic callose deposition, increased glucose level, but reduced level of galactose in cell walls (PubMed:16045474). In epc1-2, dwarf, reduced cell size, defective root hair development, delayed flowering, early senescence, and hypersensitivity to abscisic acid (ABA) during germination and root elongation (PubMed:17426055). Reduced levels of beta-(1,4)-galactan (PubMed:17426055).</text>
</comment>
<comment type="miscellaneous">
    <text evidence="13">Initially thought to be involved in cell-cell adhesion (PubMed:16045474), this function could not be confirmed (PubMed:17426055).</text>
</comment>
<comment type="similarity">
    <text evidence="12">Belongs to the glycosyltransferase 64 family.</text>
</comment>
<comment type="online information" name="CAZY, the Carbohydrate Active enZYmes database">
    <link uri="https://www.cazy.org/GT64_all.html"/>
</comment>
<accession>Q9LY62</accession>
<feature type="chain" id="PRO_0000430883" description="Glycosylinositol phosphorylceramide mannosyl transferase 1">
    <location>
        <begin position="1"/>
        <end position="334"/>
    </location>
</feature>
<feature type="topological domain" description="Cytoplasmic" evidence="3">
    <location>
        <begin position="1"/>
        <end position="26"/>
    </location>
</feature>
<feature type="transmembrane region" description="Helical; Signal-anchor for type II membrane protein" evidence="3">
    <location>
        <begin position="27"/>
        <end position="49"/>
    </location>
</feature>
<feature type="topological domain" description="Lumenal" evidence="3">
    <location>
        <begin position="50"/>
        <end position="334"/>
    </location>
</feature>
<feature type="active site" evidence="2">
    <location>
        <position position="262"/>
    </location>
</feature>
<feature type="binding site" evidence="2">
    <location>
        <begin position="145"/>
        <end position="150"/>
    </location>
    <ligand>
        <name>substrate</name>
    </ligand>
</feature>
<feature type="binding site" evidence="2">
    <location>
        <begin position="166"/>
        <end position="168"/>
    </location>
    <ligand>
        <name>substrate</name>
    </ligand>
</feature>
<feature type="binding site" evidence="2">
    <location>
        <position position="168"/>
    </location>
    <ligand>
        <name>Mn(2+)</name>
        <dbReference type="ChEBI" id="CHEBI:29035"/>
        <note>catalytic</note>
    </ligand>
</feature>
<feature type="binding site" evidence="2">
    <location>
        <position position="196"/>
    </location>
    <ligand>
        <name>substrate</name>
    </ligand>
</feature>
<feature type="binding site" evidence="2">
    <location>
        <begin position="258"/>
        <end position="262"/>
    </location>
    <ligand>
        <name>substrate</name>
    </ligand>
</feature>
<feature type="binding site" evidence="2">
    <location>
        <begin position="289"/>
        <end position="302"/>
    </location>
    <ligand>
        <name>substrate</name>
    </ligand>
</feature>
<feature type="binding site" evidence="2">
    <location>
        <begin position="292"/>
        <end position="302"/>
    </location>
    <ligand>
        <name>substrate</name>
    </ligand>
</feature>
<feature type="glycosylation site" description="N-linked (GlcNAc...) asparagine" evidence="4">
    <location>
        <position position="58"/>
    </location>
</feature>
<feature type="glycosylation site" description="N-linked (GlcNAc...) asparagine" evidence="4">
    <location>
        <position position="271"/>
    </location>
</feature>
<feature type="disulfide bond" evidence="2">
    <location>
        <begin position="260"/>
        <end position="305"/>
    </location>
</feature>
<keyword id="KW-0938">Abscisic acid signaling pathway</keyword>
<keyword id="KW-0130">Cell adhesion</keyword>
<keyword id="KW-0217">Developmental protein</keyword>
<keyword id="KW-1015">Disulfide bond</keyword>
<keyword id="KW-0325">Glycoprotein</keyword>
<keyword id="KW-0333">Golgi apparatus</keyword>
<keyword id="KW-0464">Manganese</keyword>
<keyword id="KW-0472">Membrane</keyword>
<keyword id="KW-0479">Metal-binding</keyword>
<keyword id="KW-1185">Reference proteome</keyword>
<keyword id="KW-0735">Signal-anchor</keyword>
<keyword id="KW-0808">Transferase</keyword>
<keyword id="KW-0812">Transmembrane</keyword>
<keyword id="KW-1133">Transmembrane helix</keyword>
<name>GMT1_ARATH</name>
<proteinExistence type="evidence at protein level"/>
<protein>
    <recommendedName>
        <fullName evidence="11">Glycosylinositol phosphorylceramide mannosyl transferase 1</fullName>
        <shortName evidence="11">GIPC mannosyl-transferase 1</shortName>
        <ecNumber evidence="7">2.4.1.-</ecNumber>
    </recommendedName>
    <alternativeName>
        <fullName evidence="10">Glycosyltransferase family 64 protein C4</fullName>
        <shortName evidence="10">GT64 C4</shortName>
    </alternativeName>
    <alternativeName>
        <fullName evidence="8">Protein ECTOPICALLY PARTING CELLS 1</fullName>
        <shortName evidence="8">AtEPC1</shortName>
    </alternativeName>
</protein>
<dbReference type="EC" id="2.4.1.-" evidence="7"/>
<dbReference type="EMBL" id="KJ138787">
    <property type="protein sequence ID" value="AHL38727.1"/>
    <property type="molecule type" value="mRNA"/>
</dbReference>
<dbReference type="EMBL" id="AL163832">
    <property type="protein sequence ID" value="CAB87837.1"/>
    <property type="molecule type" value="Genomic_DNA"/>
</dbReference>
<dbReference type="EMBL" id="CP002686">
    <property type="protein sequence ID" value="AEE79446.1"/>
    <property type="molecule type" value="Genomic_DNA"/>
</dbReference>
<dbReference type="EMBL" id="AK228499">
    <property type="protein sequence ID" value="BAF00425.1"/>
    <property type="molecule type" value="mRNA"/>
</dbReference>
<dbReference type="PIR" id="T49195">
    <property type="entry name" value="T49195"/>
</dbReference>
<dbReference type="RefSeq" id="NP_191142.1">
    <property type="nucleotide sequence ID" value="NM_115441.3"/>
</dbReference>
<dbReference type="SMR" id="Q9LY62"/>
<dbReference type="FunCoup" id="Q9LY62">
    <property type="interactions" value="1256"/>
</dbReference>
<dbReference type="STRING" id="3702.Q9LY62"/>
<dbReference type="CAZy" id="GT64">
    <property type="family name" value="Glycosyltransferase Family 64"/>
</dbReference>
<dbReference type="GlyCosmos" id="Q9LY62">
    <property type="glycosylation" value="2 sites, No reported glycans"/>
</dbReference>
<dbReference type="GlyGen" id="Q9LY62">
    <property type="glycosylation" value="2 sites"/>
</dbReference>
<dbReference type="PaxDb" id="3702-AT3G55830.1"/>
<dbReference type="ProteomicsDB" id="247309"/>
<dbReference type="EnsemblPlants" id="AT3G55830.1">
    <property type="protein sequence ID" value="AT3G55830.1"/>
    <property type="gene ID" value="AT3G55830"/>
</dbReference>
<dbReference type="GeneID" id="824749"/>
<dbReference type="Gramene" id="AT3G55830.1">
    <property type="protein sequence ID" value="AT3G55830.1"/>
    <property type="gene ID" value="AT3G55830"/>
</dbReference>
<dbReference type="KEGG" id="ath:AT3G55830"/>
<dbReference type="Araport" id="AT3G55830"/>
<dbReference type="TAIR" id="AT3G55830">
    <property type="gene designation" value="EPC1"/>
</dbReference>
<dbReference type="eggNOG" id="KOG1022">
    <property type="taxonomic scope" value="Eukaryota"/>
</dbReference>
<dbReference type="HOGENOM" id="CLU_013906_1_1_1"/>
<dbReference type="InParanoid" id="Q9LY62"/>
<dbReference type="OMA" id="HYQGVPH"/>
<dbReference type="PhylomeDB" id="Q9LY62"/>
<dbReference type="BioCyc" id="ARA:AT3G55830-MONOMER"/>
<dbReference type="UniPathway" id="UPA00378"/>
<dbReference type="PRO" id="PR:Q9LY62"/>
<dbReference type="Proteomes" id="UP000006548">
    <property type="component" value="Chromosome 3"/>
</dbReference>
<dbReference type="ExpressionAtlas" id="Q9LY62">
    <property type="expression patterns" value="baseline and differential"/>
</dbReference>
<dbReference type="GO" id="GO:0005768">
    <property type="term" value="C:endosome"/>
    <property type="evidence" value="ECO:0007005"/>
    <property type="project" value="TAIR"/>
</dbReference>
<dbReference type="GO" id="GO:0005794">
    <property type="term" value="C:Golgi apparatus"/>
    <property type="evidence" value="ECO:0000314"/>
    <property type="project" value="UniProtKB"/>
</dbReference>
<dbReference type="GO" id="GO:0000139">
    <property type="term" value="C:Golgi membrane"/>
    <property type="evidence" value="ECO:0007669"/>
    <property type="project" value="UniProtKB-SubCell"/>
</dbReference>
<dbReference type="GO" id="GO:0005802">
    <property type="term" value="C:trans-Golgi network"/>
    <property type="evidence" value="ECO:0007005"/>
    <property type="project" value="TAIR"/>
</dbReference>
<dbReference type="GO" id="GO:0016757">
    <property type="term" value="F:glycosyltransferase activity"/>
    <property type="evidence" value="ECO:0000315"/>
    <property type="project" value="TAIR"/>
</dbReference>
<dbReference type="GO" id="GO:0046872">
    <property type="term" value="F:metal ion binding"/>
    <property type="evidence" value="ECO:0007669"/>
    <property type="project" value="UniProtKB-KW"/>
</dbReference>
<dbReference type="GO" id="GO:0035251">
    <property type="term" value="F:UDP-glucosyltransferase activity"/>
    <property type="evidence" value="ECO:0000250"/>
    <property type="project" value="TAIR"/>
</dbReference>
<dbReference type="GO" id="GO:0009738">
    <property type="term" value="P:abscisic acid-activated signaling pathway"/>
    <property type="evidence" value="ECO:0007669"/>
    <property type="project" value="UniProtKB-KW"/>
</dbReference>
<dbReference type="GO" id="GO:0008219">
    <property type="term" value="P:cell death"/>
    <property type="evidence" value="ECO:0000315"/>
    <property type="project" value="TAIR"/>
</dbReference>
<dbReference type="GO" id="GO:0098609">
    <property type="term" value="P:cell-cell adhesion"/>
    <property type="evidence" value="ECO:0000315"/>
    <property type="project" value="TAIR"/>
</dbReference>
<dbReference type="GO" id="GO:0097502">
    <property type="term" value="P:mannosylation"/>
    <property type="evidence" value="ECO:0000315"/>
    <property type="project" value="UniProtKB"/>
</dbReference>
<dbReference type="GO" id="GO:0010401">
    <property type="term" value="P:pectic galactan metabolic process"/>
    <property type="evidence" value="ECO:0000315"/>
    <property type="project" value="UniProtKB"/>
</dbReference>
<dbReference type="GO" id="GO:0010087">
    <property type="term" value="P:phloem or xylem histogenesis"/>
    <property type="evidence" value="ECO:0000315"/>
    <property type="project" value="TAIR"/>
</dbReference>
<dbReference type="GO" id="GO:0052541">
    <property type="term" value="P:plant-type cell wall cellulose metabolic process"/>
    <property type="evidence" value="ECO:0000315"/>
    <property type="project" value="TAIR"/>
</dbReference>
<dbReference type="GO" id="GO:0006486">
    <property type="term" value="P:protein glycosylation"/>
    <property type="evidence" value="ECO:0007669"/>
    <property type="project" value="UniProtKB-UniPathway"/>
</dbReference>
<dbReference type="GO" id="GO:0009737">
    <property type="term" value="P:response to abscisic acid"/>
    <property type="evidence" value="ECO:0000315"/>
    <property type="project" value="UniProtKB"/>
</dbReference>
<dbReference type="GO" id="GO:0006665">
    <property type="term" value="P:sphingolipid metabolic process"/>
    <property type="evidence" value="ECO:0000315"/>
    <property type="project" value="TAIR"/>
</dbReference>
<dbReference type="FunFam" id="3.90.550.10:FF:000058">
    <property type="entry name" value="Exostosin-like glycosyltransferase 2"/>
    <property type="match status" value="1"/>
</dbReference>
<dbReference type="Gene3D" id="3.90.550.10">
    <property type="entry name" value="Spore Coat Polysaccharide Biosynthesis Protein SpsA, Chain A"/>
    <property type="match status" value="1"/>
</dbReference>
<dbReference type="InterPro" id="IPR053318">
    <property type="entry name" value="GT64"/>
</dbReference>
<dbReference type="InterPro" id="IPR015338">
    <property type="entry name" value="GT64_dom"/>
</dbReference>
<dbReference type="InterPro" id="IPR029044">
    <property type="entry name" value="Nucleotide-diphossugar_trans"/>
</dbReference>
<dbReference type="PANTHER" id="PTHR48410">
    <property type="entry name" value="GLYCOSYLINOSITOL PHOSPHORYLCERAMIDE MANNOSYL TRANSFERASE 1"/>
    <property type="match status" value="1"/>
</dbReference>
<dbReference type="PANTHER" id="PTHR48410:SF1">
    <property type="entry name" value="GLYCOSYLINOSITOL PHOSPHORYLCERAMIDE MANNOSYL TRANSFERASE 1"/>
    <property type="match status" value="1"/>
</dbReference>
<dbReference type="Pfam" id="PF09258">
    <property type="entry name" value="Glyco_transf_64"/>
    <property type="match status" value="1"/>
</dbReference>
<dbReference type="SUPFAM" id="SSF53448">
    <property type="entry name" value="Nucleotide-diphospho-sugar transferases"/>
    <property type="match status" value="1"/>
</dbReference>
<organism>
    <name type="scientific">Arabidopsis thaliana</name>
    <name type="common">Mouse-ear cress</name>
    <dbReference type="NCBI Taxonomy" id="3702"/>
    <lineage>
        <taxon>Eukaryota</taxon>
        <taxon>Viridiplantae</taxon>
        <taxon>Streptophyta</taxon>
        <taxon>Embryophyta</taxon>
        <taxon>Tracheophyta</taxon>
        <taxon>Spermatophyta</taxon>
        <taxon>Magnoliopsida</taxon>
        <taxon>eudicotyledons</taxon>
        <taxon>Gunneridae</taxon>
        <taxon>Pentapetalae</taxon>
        <taxon>rosids</taxon>
        <taxon>malvids</taxon>
        <taxon>Brassicales</taxon>
        <taxon>Brassicaceae</taxon>
        <taxon>Camelineae</taxon>
        <taxon>Arabidopsis</taxon>
    </lineage>
</organism>